<gene>
    <name evidence="1" type="primary">rbcL</name>
</gene>
<geneLocation type="chloroplast"/>
<protein>
    <recommendedName>
        <fullName evidence="1">Ribulose bisphosphate carboxylase large chain</fullName>
        <shortName evidence="1">RuBisCO large subunit</shortName>
        <ecNumber evidence="1">4.1.1.39</ecNumber>
    </recommendedName>
</protein>
<keyword id="KW-0007">Acetylation</keyword>
<keyword id="KW-0113">Calvin cycle</keyword>
<keyword id="KW-0120">Carbon dioxide fixation</keyword>
<keyword id="KW-0150">Chloroplast</keyword>
<keyword id="KW-1015">Disulfide bond</keyword>
<keyword id="KW-0456">Lyase</keyword>
<keyword id="KW-0460">Magnesium</keyword>
<keyword id="KW-0479">Metal-binding</keyword>
<keyword id="KW-0488">Methylation</keyword>
<keyword id="KW-0503">Monooxygenase</keyword>
<keyword id="KW-0560">Oxidoreductase</keyword>
<keyword id="KW-0601">Photorespiration</keyword>
<keyword id="KW-0602">Photosynthesis</keyword>
<keyword id="KW-0934">Plastid</keyword>
<reference key="1">
    <citation type="journal article" date="2003" name="Plant Syst. Evol.">
        <title>The chloroplast genome of the 'basal' angiosperm Calycanthus fertilis -- structural and phylogenetic analyses.</title>
        <authorList>
            <person name="Goremykin V."/>
            <person name="Hirsch-Ernst K.I."/>
            <person name="Woelfl S."/>
            <person name="Hellwig F.H."/>
        </authorList>
    </citation>
    <scope>NUCLEOTIDE SEQUENCE [LARGE SCALE GENOMIC DNA]</scope>
</reference>
<name>RBL_CALFG</name>
<evidence type="ECO:0000255" key="1">
    <source>
        <dbReference type="HAMAP-Rule" id="MF_01338"/>
    </source>
</evidence>
<dbReference type="EC" id="4.1.1.39" evidence="1"/>
<dbReference type="EMBL" id="AJ428413">
    <property type="protein sequence ID" value="CAD28729.1"/>
    <property type="molecule type" value="Genomic_DNA"/>
</dbReference>
<dbReference type="RefSeq" id="NP_862762.1">
    <property type="nucleotide sequence ID" value="NC_004993.1"/>
</dbReference>
<dbReference type="SMR" id="Q7YJW4"/>
<dbReference type="GeneID" id="2598020"/>
<dbReference type="GO" id="GO:0009507">
    <property type="term" value="C:chloroplast"/>
    <property type="evidence" value="ECO:0007669"/>
    <property type="project" value="UniProtKB-SubCell"/>
</dbReference>
<dbReference type="GO" id="GO:0000287">
    <property type="term" value="F:magnesium ion binding"/>
    <property type="evidence" value="ECO:0007669"/>
    <property type="project" value="UniProtKB-UniRule"/>
</dbReference>
<dbReference type="GO" id="GO:0004497">
    <property type="term" value="F:monooxygenase activity"/>
    <property type="evidence" value="ECO:0007669"/>
    <property type="project" value="UniProtKB-KW"/>
</dbReference>
<dbReference type="GO" id="GO:0016984">
    <property type="term" value="F:ribulose-bisphosphate carboxylase activity"/>
    <property type="evidence" value="ECO:0007669"/>
    <property type="project" value="UniProtKB-UniRule"/>
</dbReference>
<dbReference type="GO" id="GO:0009853">
    <property type="term" value="P:photorespiration"/>
    <property type="evidence" value="ECO:0007669"/>
    <property type="project" value="UniProtKB-KW"/>
</dbReference>
<dbReference type="GO" id="GO:0019253">
    <property type="term" value="P:reductive pentose-phosphate cycle"/>
    <property type="evidence" value="ECO:0007669"/>
    <property type="project" value="UniProtKB-UniRule"/>
</dbReference>
<dbReference type="CDD" id="cd08212">
    <property type="entry name" value="RuBisCO_large_I"/>
    <property type="match status" value="1"/>
</dbReference>
<dbReference type="FunFam" id="3.20.20.110:FF:000001">
    <property type="entry name" value="Ribulose bisphosphate carboxylase large chain"/>
    <property type="match status" value="1"/>
</dbReference>
<dbReference type="FunFam" id="3.30.70.150:FF:000001">
    <property type="entry name" value="Ribulose bisphosphate carboxylase large chain"/>
    <property type="match status" value="1"/>
</dbReference>
<dbReference type="Gene3D" id="3.20.20.110">
    <property type="entry name" value="Ribulose bisphosphate carboxylase, large subunit, C-terminal domain"/>
    <property type="match status" value="1"/>
</dbReference>
<dbReference type="Gene3D" id="3.30.70.150">
    <property type="entry name" value="RuBisCO large subunit, N-terminal domain"/>
    <property type="match status" value="1"/>
</dbReference>
<dbReference type="HAMAP" id="MF_01338">
    <property type="entry name" value="RuBisCO_L_type1"/>
    <property type="match status" value="1"/>
</dbReference>
<dbReference type="InterPro" id="IPR033966">
    <property type="entry name" value="RuBisCO"/>
</dbReference>
<dbReference type="InterPro" id="IPR020878">
    <property type="entry name" value="RuBisCo_large_chain_AS"/>
</dbReference>
<dbReference type="InterPro" id="IPR000685">
    <property type="entry name" value="RuBisCO_lsu_C"/>
</dbReference>
<dbReference type="InterPro" id="IPR036376">
    <property type="entry name" value="RuBisCO_lsu_C_sf"/>
</dbReference>
<dbReference type="InterPro" id="IPR017443">
    <property type="entry name" value="RuBisCO_lsu_fd_N"/>
</dbReference>
<dbReference type="InterPro" id="IPR036422">
    <property type="entry name" value="RuBisCO_lsu_N_sf"/>
</dbReference>
<dbReference type="InterPro" id="IPR020888">
    <property type="entry name" value="RuBisCO_lsuI"/>
</dbReference>
<dbReference type="NCBIfam" id="NF003252">
    <property type="entry name" value="PRK04208.1"/>
    <property type="match status" value="1"/>
</dbReference>
<dbReference type="PANTHER" id="PTHR42704">
    <property type="entry name" value="RIBULOSE BISPHOSPHATE CARBOXYLASE"/>
    <property type="match status" value="1"/>
</dbReference>
<dbReference type="PANTHER" id="PTHR42704:SF16">
    <property type="entry name" value="RIBULOSE BISPHOSPHATE CARBOXYLASE LARGE CHAIN"/>
    <property type="match status" value="1"/>
</dbReference>
<dbReference type="Pfam" id="PF00016">
    <property type="entry name" value="RuBisCO_large"/>
    <property type="match status" value="1"/>
</dbReference>
<dbReference type="Pfam" id="PF02788">
    <property type="entry name" value="RuBisCO_large_N"/>
    <property type="match status" value="1"/>
</dbReference>
<dbReference type="SFLD" id="SFLDG01052">
    <property type="entry name" value="RuBisCO"/>
    <property type="match status" value="1"/>
</dbReference>
<dbReference type="SFLD" id="SFLDS00014">
    <property type="entry name" value="RuBisCO"/>
    <property type="match status" value="1"/>
</dbReference>
<dbReference type="SFLD" id="SFLDG00301">
    <property type="entry name" value="RuBisCO-like_proteins"/>
    <property type="match status" value="1"/>
</dbReference>
<dbReference type="SUPFAM" id="SSF51649">
    <property type="entry name" value="RuBisCo, C-terminal domain"/>
    <property type="match status" value="1"/>
</dbReference>
<dbReference type="SUPFAM" id="SSF54966">
    <property type="entry name" value="RuBisCO, large subunit, small (N-terminal) domain"/>
    <property type="match status" value="1"/>
</dbReference>
<dbReference type="PROSITE" id="PS00157">
    <property type="entry name" value="RUBISCO_LARGE"/>
    <property type="match status" value="1"/>
</dbReference>
<sequence>MSPKTETKAGVGFKAGVKDYKLTYYTPDYETKDTDILAAFRVTPQPGVPAEEAGAAVAAESSTGTWTTVWTDGLTSLDRYKGRCYHIEPVAGEESQFIAYVAYPLDLFEEGSVTNMFTSIVGNVFGFKALRALRLEDLRIPPAYTKTFLGPPHGIQVERDKLNKYGRPLLGCTIKPKLGLSAKNYGRAVYECLRGGLDFTKDDENVNSQPFMRWRDRFLFCAEAIFKSQAETGEIKGHYLNATAGTCEEMIKRAVFARELGVPIVMHDYLTGGFTANTSLAHYCRDNGLLLHIHRAMHAVIDRQKNHGMHFRVLAKALRMSGGDHIHAGTVVGKLEGEREITLGFVDLLRDDFIEKDRSRGIYFTQDWVSMPGVLPVASGGIHVWHMPALTEIFGDDSVLQFGGGTLGHPWGNAPGAVANRVALEACVQARNEGRNLAREGNEIIREASKWSPELAAACEVWKEIKFEFEAMDTL</sequence>
<comment type="function">
    <text evidence="1">RuBisCO catalyzes two reactions: the carboxylation of D-ribulose 1,5-bisphosphate, the primary event in carbon dioxide fixation, as well as the oxidative fragmentation of the pentose substrate in the photorespiration process. Both reactions occur simultaneously and in competition at the same active site.</text>
</comment>
<comment type="catalytic activity">
    <reaction evidence="1">
        <text>2 (2R)-3-phosphoglycerate + 2 H(+) = D-ribulose 1,5-bisphosphate + CO2 + H2O</text>
        <dbReference type="Rhea" id="RHEA:23124"/>
        <dbReference type="ChEBI" id="CHEBI:15377"/>
        <dbReference type="ChEBI" id="CHEBI:15378"/>
        <dbReference type="ChEBI" id="CHEBI:16526"/>
        <dbReference type="ChEBI" id="CHEBI:57870"/>
        <dbReference type="ChEBI" id="CHEBI:58272"/>
        <dbReference type="EC" id="4.1.1.39"/>
    </reaction>
</comment>
<comment type="catalytic activity">
    <reaction evidence="1">
        <text>D-ribulose 1,5-bisphosphate + O2 = 2-phosphoglycolate + (2R)-3-phosphoglycerate + 2 H(+)</text>
        <dbReference type="Rhea" id="RHEA:36631"/>
        <dbReference type="ChEBI" id="CHEBI:15378"/>
        <dbReference type="ChEBI" id="CHEBI:15379"/>
        <dbReference type="ChEBI" id="CHEBI:57870"/>
        <dbReference type="ChEBI" id="CHEBI:58033"/>
        <dbReference type="ChEBI" id="CHEBI:58272"/>
    </reaction>
</comment>
<comment type="cofactor">
    <cofactor evidence="1">
        <name>Mg(2+)</name>
        <dbReference type="ChEBI" id="CHEBI:18420"/>
    </cofactor>
    <text evidence="1">Binds 1 Mg(2+) ion per subunit.</text>
</comment>
<comment type="subunit">
    <text evidence="1">Heterohexadecamer of 8 large chains and 8 small chains; disulfide-linked. The disulfide link is formed within the large subunit homodimers.</text>
</comment>
<comment type="subcellular location">
    <subcellularLocation>
        <location>Plastid</location>
        <location>Chloroplast</location>
    </subcellularLocation>
</comment>
<comment type="PTM">
    <text evidence="1">The disulfide bond which can form in the large chain dimeric partners within the hexadecamer appears to be associated with oxidative stress and protein turnover.</text>
</comment>
<comment type="miscellaneous">
    <text evidence="1">The basic functional RuBisCO is composed of a large chain homodimer in a 'head-to-tail' conformation. In form I RuBisCO this homodimer is arranged in a barrel-like tetramer with the small subunits forming a tetrameric 'cap' on each end of the 'barrel'.</text>
</comment>
<comment type="similarity">
    <text evidence="1">Belongs to the RuBisCO large chain family. Type I subfamily.</text>
</comment>
<accession>Q7YJW4</accession>
<organism>
    <name type="scientific">Calycanthus floridus var. glaucus</name>
    <name type="common">Eastern sweetshrub</name>
    <name type="synonym">Calycanthus fertilis var. ferax</name>
    <dbReference type="NCBI Taxonomy" id="212734"/>
    <lineage>
        <taxon>Eukaryota</taxon>
        <taxon>Viridiplantae</taxon>
        <taxon>Streptophyta</taxon>
        <taxon>Embryophyta</taxon>
        <taxon>Tracheophyta</taxon>
        <taxon>Spermatophyta</taxon>
        <taxon>Magnoliopsida</taxon>
        <taxon>Magnoliidae</taxon>
        <taxon>Laurales</taxon>
        <taxon>Calycanthaceae</taxon>
        <taxon>Calycanthus</taxon>
    </lineage>
</organism>
<feature type="propeptide" id="PRO_0000042907" evidence="1">
    <location>
        <begin position="1"/>
        <end position="2"/>
    </location>
</feature>
<feature type="chain" id="PRO_0000042908" description="Ribulose bisphosphate carboxylase large chain">
    <location>
        <begin position="3"/>
        <end position="475"/>
    </location>
</feature>
<feature type="active site" description="Proton acceptor" evidence="1">
    <location>
        <position position="175"/>
    </location>
</feature>
<feature type="active site" description="Proton acceptor" evidence="1">
    <location>
        <position position="294"/>
    </location>
</feature>
<feature type="binding site" description="in homodimeric partner" evidence="1">
    <location>
        <position position="123"/>
    </location>
    <ligand>
        <name>substrate</name>
    </ligand>
</feature>
<feature type="binding site" evidence="1">
    <location>
        <position position="173"/>
    </location>
    <ligand>
        <name>substrate</name>
    </ligand>
</feature>
<feature type="binding site" evidence="1">
    <location>
        <position position="177"/>
    </location>
    <ligand>
        <name>substrate</name>
    </ligand>
</feature>
<feature type="binding site" description="via carbamate group" evidence="1">
    <location>
        <position position="201"/>
    </location>
    <ligand>
        <name>Mg(2+)</name>
        <dbReference type="ChEBI" id="CHEBI:18420"/>
    </ligand>
</feature>
<feature type="binding site" evidence="1">
    <location>
        <position position="203"/>
    </location>
    <ligand>
        <name>Mg(2+)</name>
        <dbReference type="ChEBI" id="CHEBI:18420"/>
    </ligand>
</feature>
<feature type="binding site" evidence="1">
    <location>
        <position position="204"/>
    </location>
    <ligand>
        <name>Mg(2+)</name>
        <dbReference type="ChEBI" id="CHEBI:18420"/>
    </ligand>
</feature>
<feature type="binding site" evidence="1">
    <location>
        <position position="295"/>
    </location>
    <ligand>
        <name>substrate</name>
    </ligand>
</feature>
<feature type="binding site" evidence="1">
    <location>
        <position position="327"/>
    </location>
    <ligand>
        <name>substrate</name>
    </ligand>
</feature>
<feature type="binding site" evidence="1">
    <location>
        <position position="379"/>
    </location>
    <ligand>
        <name>substrate</name>
    </ligand>
</feature>
<feature type="site" description="Transition state stabilizer" evidence="1">
    <location>
        <position position="334"/>
    </location>
</feature>
<feature type="modified residue" description="N-acetylproline" evidence="1">
    <location>
        <position position="3"/>
    </location>
</feature>
<feature type="modified residue" description="N6,N6,N6-trimethyllysine" evidence="1">
    <location>
        <position position="14"/>
    </location>
</feature>
<feature type="modified residue" description="N6-carboxylysine" evidence="1">
    <location>
        <position position="201"/>
    </location>
</feature>
<feature type="disulfide bond" description="Interchain; in linked form" evidence="1">
    <location>
        <position position="247"/>
    </location>
</feature>
<proteinExistence type="inferred from homology"/>